<dbReference type="EMBL" id="BX284606">
    <property type="protein sequence ID" value="CAA93511.1"/>
    <property type="molecule type" value="Genomic_DNA"/>
</dbReference>
<dbReference type="PIR" id="T23232">
    <property type="entry name" value="T23232"/>
</dbReference>
<dbReference type="RefSeq" id="NP_510319.1">
    <property type="nucleotide sequence ID" value="NM_077918.8"/>
</dbReference>
<dbReference type="SMR" id="Q21126"/>
<dbReference type="DIP" id="DIP-27481N"/>
<dbReference type="FunCoup" id="Q21126">
    <property type="interactions" value="8"/>
</dbReference>
<dbReference type="STRING" id="6239.K02B9.1.1"/>
<dbReference type="iPTMnet" id="Q21126"/>
<dbReference type="PaxDb" id="6239-K02B9.1"/>
<dbReference type="EnsemblMetazoa" id="K02B9.1.1">
    <property type="protein sequence ID" value="K02B9.1.1"/>
    <property type="gene ID" value="WBGene00010492"/>
</dbReference>
<dbReference type="GeneID" id="181502"/>
<dbReference type="KEGG" id="cel:CELE_K02B9.1"/>
<dbReference type="UCSC" id="K02B9.1">
    <property type="organism name" value="c. elegans"/>
</dbReference>
<dbReference type="AGR" id="WB:WBGene00010492"/>
<dbReference type="CTD" id="181502"/>
<dbReference type="WormBase" id="K02B9.1">
    <property type="protein sequence ID" value="CE16206"/>
    <property type="gene ID" value="WBGene00010492"/>
    <property type="gene designation" value="meg-1"/>
</dbReference>
<dbReference type="GeneTree" id="ENSGT00970000198175"/>
<dbReference type="HOGENOM" id="CLU_430371_0_0_1"/>
<dbReference type="InParanoid" id="Q21126"/>
<dbReference type="CD-CODE" id="73A75392">
    <property type="entry name" value="P-granule"/>
</dbReference>
<dbReference type="PRO" id="PR:Q21126"/>
<dbReference type="Proteomes" id="UP000001940">
    <property type="component" value="Chromosome X"/>
</dbReference>
<dbReference type="Bgee" id="WBGene00010492">
    <property type="expression patterns" value="Expressed in germ line (C elegans) and 3 other cell types or tissues"/>
</dbReference>
<dbReference type="GO" id="GO:0043186">
    <property type="term" value="C:P granule"/>
    <property type="evidence" value="ECO:0000314"/>
    <property type="project" value="WormBase"/>
</dbReference>
<dbReference type="GO" id="GO:0036093">
    <property type="term" value="P:germ cell proliferation"/>
    <property type="evidence" value="ECO:0000316"/>
    <property type="project" value="WormBase"/>
</dbReference>
<dbReference type="GO" id="GO:0048609">
    <property type="term" value="P:multicellular organismal reproductive process"/>
    <property type="evidence" value="ECO:0000315"/>
    <property type="project" value="WormBase"/>
</dbReference>
<dbReference type="GO" id="GO:1903864">
    <property type="term" value="P:P granule disassembly"/>
    <property type="evidence" value="ECO:0000316"/>
    <property type="project" value="WormBase"/>
</dbReference>
<dbReference type="GO" id="GO:0022414">
    <property type="term" value="P:reproductive process"/>
    <property type="evidence" value="ECO:0000315"/>
    <property type="project" value="WormBase"/>
</dbReference>
<name>MEGG1_CAEEL</name>
<keyword id="KW-0217">Developmental protein</keyword>
<keyword id="KW-0597">Phosphoprotein</keyword>
<keyword id="KW-1185">Reference proteome</keyword>
<reference evidence="7" key="1">
    <citation type="journal article" date="1998" name="Science">
        <title>Genome sequence of the nematode C. elegans: a platform for investigating biology.</title>
        <authorList>
            <consortium name="The C. elegans sequencing consortium"/>
        </authorList>
    </citation>
    <scope>NUCLEOTIDE SEQUENCE [LARGE SCALE GENOMIC DNA]</scope>
    <source>
        <strain evidence="7">Bristol N2</strain>
    </source>
</reference>
<reference evidence="6" key="2">
    <citation type="journal article" date="2008" name="Genetics">
        <title>MEG-1 and MEG-2 are embryo-specific P-granule components required for germline development in Caenorhabditis elegans.</title>
        <authorList>
            <person name="Leacock S.W."/>
            <person name="Reinke V."/>
        </authorList>
    </citation>
    <scope>FUNCTION</scope>
    <scope>SUBCELLULAR LOCATION</scope>
    <scope>TISSUE SPECIFICITY</scope>
    <scope>DEVELOPMENTAL STAGE</scope>
    <scope>DISRUPTION PHENOTYPE</scope>
</reference>
<reference evidence="6" key="3">
    <citation type="journal article" date="2011" name="Genesis">
        <title>C. elegans meg-1 and meg-2 differentially interact with nanos family members to either promote or inhibit germ cell proliferation and survival.</title>
        <authorList>
            <person name="Kapelle W.S."/>
            <person name="Reinke V."/>
        </authorList>
    </citation>
    <scope>FUNCTION</scope>
</reference>
<reference evidence="6" key="4">
    <citation type="journal article" date="2014" name="Elife">
        <title>Regulation of RNA granule dynamics by phosphorylation of serine-rich, intrinsically disordered proteins in C. elegans.</title>
        <authorList>
            <person name="Wang J.T."/>
            <person name="Smith J."/>
            <person name="Chen B.C."/>
            <person name="Schmidt H."/>
            <person name="Rasoloson D."/>
            <person name="Paix A."/>
            <person name="Lambrus B.G."/>
            <person name="Calidas D."/>
            <person name="Betzig E."/>
            <person name="Seydoux G."/>
        </authorList>
    </citation>
    <scope>FUNCTION</scope>
    <scope>INTERACTION WITH PPTR-1; PPTR-2 AND PGL-1</scope>
    <scope>DISRUPTION PHENOTYPE</scope>
    <scope>PHOSPHORYLATION AT SER-574</scope>
    <scope>MUTAGENESIS OF SER-574</scope>
</reference>
<comment type="function">
    <text evidence="2 3 4">P granule component, which acts redundantly with P granule component meg-2 to promote P granule segregation during embryogenesis, and germ cell proliferation and differentiation in larval stages (PubMed:18202375, PubMed:21305687, PubMed:25535836). In its phosphorylated form, and together with meg-2, promotes the disassembly of zygotic P granules in the anterior cytoplasm of pre-gastrulation embryos (PubMed:25535836). In its dephosphorylated form, and together with meg-2, promotes the assembly and accumulation of zygotic P granules in the posterior cytoplasm of pre-gastrulation embryos (PubMed:25535836). May function with the nanos family members nos-2 and nos-3 to promote germ cell proliferation during larval development (PubMed:21305687). Required for fertility (PubMed:18202375, PubMed:21305687).</text>
</comment>
<comment type="subunit">
    <text evidence="4">Interacts with pptr-1, pptr-2 and pgl-1.</text>
</comment>
<comment type="subcellular location">
    <subcellularLocation>
        <location evidence="2">Cytoplasmic granule</location>
    </subcellularLocation>
    <text evidence="2">Localizes to P granules in embryogenesis (PubMed:18202375). Localization to P granules may depend on mes-1 (PubMed:18202375).</text>
</comment>
<comment type="tissue specificity">
    <text evidence="2">Not expressed in the adult germline or in any somatic tissues.</text>
</comment>
<comment type="developmental stage">
    <text evidence="2">Expressed in the P lineage during embryogenesis (PubMed:18202375). First expressed at the 4- to 8-cell stage, and expression remains throughout the remaining P cell divisions in P2, P3 and P4 cells, and subsequently in primordial germ cells Z2 and Z3 (PubMed:18202375). Expression begins to diminish at the 100-cell stage (PubMed:18202375).</text>
</comment>
<comment type="PTM">
    <text evidence="4">Phosphorylated by mbk-2, which promotes the disassembly of zygotic P granules in the anterior cytoplasm of pre-gastrulation embryos (PubMed:25535836). Dephosphorylated by a phosphatase complex containing the PP2A regulatory subunit pptr-1, which promotes the assembly and accumulation of zygotic P granules in the posterior cytoplasm of pre-gastrulation embryos (PubMed:25535836).</text>
</comment>
<comment type="disruption phenotype">
    <text evidence="2 4">RNAi-mediated knockdown results in sterility, and in P granule segregation defects (PubMed:18202375). Simultaneous RNAi-mediated knockdown of meg-1 and meg-2 results in defects in P granule disassembly in the anterior cytoplasm of the P1 blastomere causing some P granules to be mis-segregated to somatic blastomeres (PubMed:25535836).</text>
</comment>
<feature type="chain" id="PRO_0000456204" description="Protein meg-1">
    <location>
        <begin position="1"/>
        <end position="636"/>
    </location>
</feature>
<feature type="region of interest" description="Disordered" evidence="1">
    <location>
        <begin position="1"/>
        <end position="54"/>
    </location>
</feature>
<feature type="region of interest" description="Disordered" evidence="1">
    <location>
        <begin position="289"/>
        <end position="367"/>
    </location>
</feature>
<feature type="region of interest" description="Disordered" evidence="1">
    <location>
        <begin position="484"/>
        <end position="504"/>
    </location>
</feature>
<feature type="region of interest" description="Disordered" evidence="1">
    <location>
        <begin position="521"/>
        <end position="542"/>
    </location>
</feature>
<feature type="region of interest" description="Disordered" evidence="1">
    <location>
        <begin position="591"/>
        <end position="636"/>
    </location>
</feature>
<feature type="compositionally biased region" description="Polar residues" evidence="1">
    <location>
        <begin position="1"/>
        <end position="13"/>
    </location>
</feature>
<feature type="compositionally biased region" description="Polar residues" evidence="1">
    <location>
        <begin position="38"/>
        <end position="54"/>
    </location>
</feature>
<feature type="compositionally biased region" description="Polar residues" evidence="1">
    <location>
        <begin position="292"/>
        <end position="355"/>
    </location>
</feature>
<feature type="compositionally biased region" description="Basic and acidic residues" evidence="1">
    <location>
        <begin position="608"/>
        <end position="636"/>
    </location>
</feature>
<feature type="modified residue" description="Phosphoserine; by mbk-2" evidence="4">
    <location>
        <position position="574"/>
    </location>
</feature>
<feature type="mutagenesis site" description="Reduces phosphorylation." evidence="4">
    <original>S</original>
    <variation>A</variation>
    <location>
        <position position="574"/>
    </location>
</feature>
<accession>Q21126</accession>
<sequence>MDNRGHFSSNGNFPPQGYHRREQSQEGMRIGNHHGPFSSGNMRSIGGSAQNQQQRHWTNMLNGSNNVENSWVCFSGNTSLADDPNVLSNFSALAQQRVNHFDTIVQERDNRNASFLNGSAVGNNLNTSFSVFGNLRGGDQDHRVLSDHTGIYTGLGSTGQNAVGTGIRLAADVANGNFLEQRAPTAMGHNQSYSALNQSLAPTLLDQYNQALLDQYNQSSQMAQGRGYPAPNIAYGLQNAGFPAPQIAHRPNTQNADPQAMNMNNRLRDHTFQMPHTNAQVPMSSLPGLFNLSMNHGSGNQQFQMNQSSSGPAPQLPNLSESFQMAQGSSQVTMSSRPAHSNTSMNHSSRNQYNHVDQRPSRPAPHLPTLTKEEEAFLETPDFEQFGRQLYNYLLPGILPNGAADTFSDAPKHQLLKLAKTLKPMLYDYWRKTMQMQNRGANINIIQWIIDFNAKFAALNSSVAKASNSSDVLNQTLPTAAEVSDVAREDASTSQPSKSRSMYIRPAASLDNTLETLDENLDSSQSHAGPVPAASTKPKTPSFEKMIRYSGIKKRSTMDMDNFVRMLDEKINFSPEPSTSSDIASSVKGYMSQSFLHQQDDEAPDCTKNVHSESDLKQAEPQESDKQSDKELPSNE</sequence>
<organism evidence="7">
    <name type="scientific">Caenorhabditis elegans</name>
    <dbReference type="NCBI Taxonomy" id="6239"/>
    <lineage>
        <taxon>Eukaryota</taxon>
        <taxon>Metazoa</taxon>
        <taxon>Ecdysozoa</taxon>
        <taxon>Nematoda</taxon>
        <taxon>Chromadorea</taxon>
        <taxon>Rhabditida</taxon>
        <taxon>Rhabditina</taxon>
        <taxon>Rhabditomorpha</taxon>
        <taxon>Rhabditoidea</taxon>
        <taxon>Rhabditidae</taxon>
        <taxon>Peloderinae</taxon>
        <taxon>Caenorhabditis</taxon>
    </lineage>
</organism>
<proteinExistence type="evidence at protein level"/>
<gene>
    <name evidence="5 8" type="primary">meg-1</name>
    <name evidence="8" type="ORF">K02B9.1</name>
</gene>
<protein>
    <recommendedName>
        <fullName evidence="6">Protein meg-1</fullName>
    </recommendedName>
    <alternativeName>
        <fullName evidence="5">Maternal effect germ cell defective 1</fullName>
    </alternativeName>
</protein>
<evidence type="ECO:0000256" key="1">
    <source>
        <dbReference type="SAM" id="MobiDB-lite"/>
    </source>
</evidence>
<evidence type="ECO:0000269" key="2">
    <source>
    </source>
</evidence>
<evidence type="ECO:0000269" key="3">
    <source>
    </source>
</evidence>
<evidence type="ECO:0000269" key="4">
    <source>
    </source>
</evidence>
<evidence type="ECO:0000303" key="5">
    <source>
    </source>
</evidence>
<evidence type="ECO:0000305" key="6"/>
<evidence type="ECO:0000312" key="7">
    <source>
        <dbReference type="Proteomes" id="UP000001940"/>
    </source>
</evidence>
<evidence type="ECO:0000312" key="8">
    <source>
        <dbReference type="WormBase" id="K02B9.1"/>
    </source>
</evidence>